<evidence type="ECO:0000255" key="1">
    <source>
        <dbReference type="HAMAP-Rule" id="MF_00300"/>
    </source>
</evidence>
<reference key="1">
    <citation type="journal article" date="2010" name="J. Bacteriol.">
        <title>Whole genome sequences of two Xylella fastidiosa strains (M12 and M23) causing almond leaf scorch disease in California.</title>
        <authorList>
            <person name="Chen J."/>
            <person name="Xie G."/>
            <person name="Han S."/>
            <person name="Chertkov O."/>
            <person name="Sims D."/>
            <person name="Civerolo E.L."/>
        </authorList>
    </citation>
    <scope>NUCLEOTIDE SEQUENCE [LARGE SCALE GENOMIC DNA]</scope>
    <source>
        <strain>M23</strain>
    </source>
</reference>
<protein>
    <recommendedName>
        <fullName evidence="1">Chorismate synthase</fullName>
        <shortName evidence="1">CS</shortName>
        <ecNumber evidence="1">4.2.3.5</ecNumber>
    </recommendedName>
    <alternativeName>
        <fullName evidence="1">5-enolpyruvylshikimate-3-phosphate phospholyase</fullName>
    </alternativeName>
</protein>
<sequence length="372" mass="39545">MGANTFGKLLAVTTFGESHGPAIGCVIDGCPPGLELAAEEFAHDLQRRATGRSRHTSARREADEVEILSGVYEGLTTGTPIALLIRNTDQRSKDYATIARQFRPGHADYTYWQKYGIRDPRGGGRSSARETTMRVAAAVVAKKWLQQRYGVTVRGFLSQLGEIRPEGFAWDAIEDNPFFWPHAAQVPALEAYMDALRKSGDSVGARVDVVAEGVPPGWGEPIYGKLDGELAAALMGINAVKGVEIGAGFGSAVQKGTEHRDLMTPLGFLSNHAGGIIGGIATGQPIIVSIALKPTSSLRLPGETVDVDGCAVQVITKGRHDPCVGIRAPPIAEAMVALVLMDQALRHRAQCGDVGEMSPCIPEGVGLRNADD</sequence>
<comment type="function">
    <text evidence="1">Catalyzes the anti-1,4-elimination of the C-3 phosphate and the C-6 proR hydrogen from 5-enolpyruvylshikimate-3-phosphate (EPSP) to yield chorismate, which is the branch point compound that serves as the starting substrate for the three terminal pathways of aromatic amino acid biosynthesis. This reaction introduces a second double bond into the aromatic ring system.</text>
</comment>
<comment type="catalytic activity">
    <reaction evidence="1">
        <text>5-O-(1-carboxyvinyl)-3-phosphoshikimate = chorismate + phosphate</text>
        <dbReference type="Rhea" id="RHEA:21020"/>
        <dbReference type="ChEBI" id="CHEBI:29748"/>
        <dbReference type="ChEBI" id="CHEBI:43474"/>
        <dbReference type="ChEBI" id="CHEBI:57701"/>
        <dbReference type="EC" id="4.2.3.5"/>
    </reaction>
</comment>
<comment type="cofactor">
    <cofactor evidence="1">
        <name>FMNH2</name>
        <dbReference type="ChEBI" id="CHEBI:57618"/>
    </cofactor>
    <text evidence="1">Reduced FMN (FMNH(2)).</text>
</comment>
<comment type="pathway">
    <text evidence="1">Metabolic intermediate biosynthesis; chorismate biosynthesis; chorismate from D-erythrose 4-phosphate and phosphoenolpyruvate: step 7/7.</text>
</comment>
<comment type="subunit">
    <text evidence="1">Homotetramer.</text>
</comment>
<comment type="similarity">
    <text evidence="1">Belongs to the chorismate synthase family.</text>
</comment>
<name>AROC_XYLF2</name>
<keyword id="KW-0028">Amino-acid biosynthesis</keyword>
<keyword id="KW-0057">Aromatic amino acid biosynthesis</keyword>
<keyword id="KW-0274">FAD</keyword>
<keyword id="KW-0285">Flavoprotein</keyword>
<keyword id="KW-0288">FMN</keyword>
<keyword id="KW-0456">Lyase</keyword>
<keyword id="KW-0521">NADP</keyword>
<dbReference type="EC" id="4.2.3.5" evidence="1"/>
<dbReference type="EMBL" id="CP001011">
    <property type="protein sequence ID" value="ACB92080.1"/>
    <property type="molecule type" value="Genomic_DNA"/>
</dbReference>
<dbReference type="RefSeq" id="WP_004090653.1">
    <property type="nucleotide sequence ID" value="NC_010577.1"/>
</dbReference>
<dbReference type="SMR" id="B2I9I6"/>
<dbReference type="GeneID" id="93904324"/>
<dbReference type="KEGG" id="xfn:XfasM23_0638"/>
<dbReference type="HOGENOM" id="CLU_034547_0_2_6"/>
<dbReference type="UniPathway" id="UPA00053">
    <property type="reaction ID" value="UER00090"/>
</dbReference>
<dbReference type="Proteomes" id="UP000001698">
    <property type="component" value="Chromosome"/>
</dbReference>
<dbReference type="GO" id="GO:0005829">
    <property type="term" value="C:cytosol"/>
    <property type="evidence" value="ECO:0007669"/>
    <property type="project" value="TreeGrafter"/>
</dbReference>
<dbReference type="GO" id="GO:0004107">
    <property type="term" value="F:chorismate synthase activity"/>
    <property type="evidence" value="ECO:0007669"/>
    <property type="project" value="UniProtKB-UniRule"/>
</dbReference>
<dbReference type="GO" id="GO:0010181">
    <property type="term" value="F:FMN binding"/>
    <property type="evidence" value="ECO:0007669"/>
    <property type="project" value="TreeGrafter"/>
</dbReference>
<dbReference type="GO" id="GO:0008652">
    <property type="term" value="P:amino acid biosynthetic process"/>
    <property type="evidence" value="ECO:0007669"/>
    <property type="project" value="UniProtKB-KW"/>
</dbReference>
<dbReference type="GO" id="GO:0009073">
    <property type="term" value="P:aromatic amino acid family biosynthetic process"/>
    <property type="evidence" value="ECO:0007669"/>
    <property type="project" value="UniProtKB-KW"/>
</dbReference>
<dbReference type="GO" id="GO:0009423">
    <property type="term" value="P:chorismate biosynthetic process"/>
    <property type="evidence" value="ECO:0007669"/>
    <property type="project" value="UniProtKB-UniRule"/>
</dbReference>
<dbReference type="CDD" id="cd07304">
    <property type="entry name" value="Chorismate_synthase"/>
    <property type="match status" value="1"/>
</dbReference>
<dbReference type="FunFam" id="3.60.150.10:FF:000001">
    <property type="entry name" value="Chorismate synthase"/>
    <property type="match status" value="1"/>
</dbReference>
<dbReference type="Gene3D" id="3.60.150.10">
    <property type="entry name" value="Chorismate synthase AroC"/>
    <property type="match status" value="1"/>
</dbReference>
<dbReference type="HAMAP" id="MF_00300">
    <property type="entry name" value="Chorismate_synth"/>
    <property type="match status" value="1"/>
</dbReference>
<dbReference type="InterPro" id="IPR000453">
    <property type="entry name" value="Chorismate_synth"/>
</dbReference>
<dbReference type="InterPro" id="IPR035904">
    <property type="entry name" value="Chorismate_synth_AroC_sf"/>
</dbReference>
<dbReference type="InterPro" id="IPR020541">
    <property type="entry name" value="Chorismate_synthase_CS"/>
</dbReference>
<dbReference type="NCBIfam" id="TIGR00033">
    <property type="entry name" value="aroC"/>
    <property type="match status" value="1"/>
</dbReference>
<dbReference type="NCBIfam" id="NF003793">
    <property type="entry name" value="PRK05382.1"/>
    <property type="match status" value="1"/>
</dbReference>
<dbReference type="PANTHER" id="PTHR21085">
    <property type="entry name" value="CHORISMATE SYNTHASE"/>
    <property type="match status" value="1"/>
</dbReference>
<dbReference type="PANTHER" id="PTHR21085:SF0">
    <property type="entry name" value="CHORISMATE SYNTHASE"/>
    <property type="match status" value="1"/>
</dbReference>
<dbReference type="Pfam" id="PF01264">
    <property type="entry name" value="Chorismate_synt"/>
    <property type="match status" value="1"/>
</dbReference>
<dbReference type="PIRSF" id="PIRSF001456">
    <property type="entry name" value="Chorismate_synth"/>
    <property type="match status" value="1"/>
</dbReference>
<dbReference type="SUPFAM" id="SSF103263">
    <property type="entry name" value="Chorismate synthase, AroC"/>
    <property type="match status" value="1"/>
</dbReference>
<dbReference type="PROSITE" id="PS00787">
    <property type="entry name" value="CHORISMATE_SYNTHASE_1"/>
    <property type="match status" value="1"/>
</dbReference>
<dbReference type="PROSITE" id="PS00788">
    <property type="entry name" value="CHORISMATE_SYNTHASE_2"/>
    <property type="match status" value="1"/>
</dbReference>
<dbReference type="PROSITE" id="PS00789">
    <property type="entry name" value="CHORISMATE_SYNTHASE_3"/>
    <property type="match status" value="1"/>
</dbReference>
<gene>
    <name evidence="1" type="primary">aroC</name>
    <name type="ordered locus">XfasM23_0638</name>
</gene>
<organism>
    <name type="scientific">Xylella fastidiosa (strain M23)</name>
    <dbReference type="NCBI Taxonomy" id="405441"/>
    <lineage>
        <taxon>Bacteria</taxon>
        <taxon>Pseudomonadati</taxon>
        <taxon>Pseudomonadota</taxon>
        <taxon>Gammaproteobacteria</taxon>
        <taxon>Lysobacterales</taxon>
        <taxon>Lysobacteraceae</taxon>
        <taxon>Xylella</taxon>
    </lineage>
</organism>
<accession>B2I9I6</accession>
<feature type="chain" id="PRO_1000115418" description="Chorismate synthase">
    <location>
        <begin position="1"/>
        <end position="372"/>
    </location>
</feature>
<feature type="binding site" evidence="1">
    <location>
        <position position="48"/>
    </location>
    <ligand>
        <name>NADP(+)</name>
        <dbReference type="ChEBI" id="CHEBI:58349"/>
    </ligand>
</feature>
<feature type="binding site" evidence="1">
    <location>
        <position position="54"/>
    </location>
    <ligand>
        <name>NADP(+)</name>
        <dbReference type="ChEBI" id="CHEBI:58349"/>
    </ligand>
</feature>
<feature type="binding site" evidence="1">
    <location>
        <begin position="125"/>
        <end position="127"/>
    </location>
    <ligand>
        <name>FMN</name>
        <dbReference type="ChEBI" id="CHEBI:58210"/>
    </ligand>
</feature>
<feature type="binding site" evidence="1">
    <location>
        <begin position="238"/>
        <end position="239"/>
    </location>
    <ligand>
        <name>FMN</name>
        <dbReference type="ChEBI" id="CHEBI:58210"/>
    </ligand>
</feature>
<feature type="binding site" evidence="1">
    <location>
        <position position="278"/>
    </location>
    <ligand>
        <name>FMN</name>
        <dbReference type="ChEBI" id="CHEBI:58210"/>
    </ligand>
</feature>
<feature type="binding site" evidence="1">
    <location>
        <begin position="293"/>
        <end position="297"/>
    </location>
    <ligand>
        <name>FMN</name>
        <dbReference type="ChEBI" id="CHEBI:58210"/>
    </ligand>
</feature>
<feature type="binding site" evidence="1">
    <location>
        <position position="319"/>
    </location>
    <ligand>
        <name>FMN</name>
        <dbReference type="ChEBI" id="CHEBI:58210"/>
    </ligand>
</feature>
<proteinExistence type="inferred from homology"/>